<keyword id="KW-0049">Antioxidant</keyword>
<keyword id="KW-0963">Cytoplasm</keyword>
<keyword id="KW-0560">Oxidoreductase</keyword>
<keyword id="KW-0575">Peroxidase</keyword>
<keyword id="KW-0676">Redox-active center</keyword>
<comment type="function">
    <text evidence="1">Thiol-specific peroxidase that catalyzes the reduction of hydrogen peroxide and organic hydroperoxides to water and alcohols, respectively. Plays a role in cell protection against oxidative stress by detoxifying peroxides.</text>
</comment>
<comment type="catalytic activity">
    <reaction evidence="1">
        <text>a hydroperoxide + [thioredoxin]-dithiol = an alcohol + [thioredoxin]-disulfide + H2O</text>
        <dbReference type="Rhea" id="RHEA:62620"/>
        <dbReference type="Rhea" id="RHEA-COMP:10698"/>
        <dbReference type="Rhea" id="RHEA-COMP:10700"/>
        <dbReference type="ChEBI" id="CHEBI:15377"/>
        <dbReference type="ChEBI" id="CHEBI:29950"/>
        <dbReference type="ChEBI" id="CHEBI:30879"/>
        <dbReference type="ChEBI" id="CHEBI:35924"/>
        <dbReference type="ChEBI" id="CHEBI:50058"/>
        <dbReference type="EC" id="1.11.1.24"/>
    </reaction>
</comment>
<comment type="subunit">
    <text evidence="1">Homodecamer. Pentamer of dimers that assemble into a ring structure.</text>
</comment>
<comment type="subcellular location">
    <subcellularLocation>
        <location evidence="1">Cytoplasm</location>
    </subcellularLocation>
</comment>
<comment type="miscellaneous">
    <text evidence="1">The active site is a conserved redox-active cysteine residue, the peroxidatic cysteine (C(P)), which makes the nucleophilic attack on the peroxide substrate. The peroxide oxidizes the C(P)-SH to cysteine sulfenic acid (C(P)-SOH), which then reacts with another cysteine residue, the resolving cysteine (C(R)), to form a disulfide bridge. The disulfide is subsequently reduced by an appropriate electron donor to complete the catalytic cycle. In this 1-Cys peroxiredoxin, no C(R) is present and C(P) instead forms a disulfide with a cysteine from another protein or with a small thiol molecule.</text>
</comment>
<comment type="similarity">
    <text evidence="1">Belongs to the peroxiredoxin family. Prx6 subfamily.</text>
</comment>
<accession>Q6L140</accession>
<gene>
    <name type="ordered locus">PTO0727</name>
</gene>
<protein>
    <recommendedName>
        <fullName evidence="1">Peroxiredoxin 2</fullName>
        <ecNumber evidence="1">1.11.1.24</ecNumber>
    </recommendedName>
    <alternativeName>
        <fullName evidence="1">Thioredoxin-dependent peroxiredoxin 2</fullName>
    </alternativeName>
</protein>
<evidence type="ECO:0000255" key="1">
    <source>
        <dbReference type="HAMAP-Rule" id="MF_00401"/>
    </source>
</evidence>
<proteinExistence type="inferred from homology"/>
<sequence>MPVYLGKRAPDFTANTTRGVISLSDYKNKWVLLFSHPADFTPICTTEFIEFSRRYNDFKELNVELIGLSVDSLQSHIEWLKDIYEKFGIEIQFPVIADINKEIAREYNLIDENAGNTVRGVFIIDPNQTVRWMIYYPAETGRNIDEILRSVKALQANWSRKIATPVNWRPGDKGILPPPSTLEDALQRIREGNKTWYIKTE</sequence>
<name>TDXH2_PICTO</name>
<feature type="chain" id="PRO_0000135162" description="Peroxiredoxin 2">
    <location>
        <begin position="1"/>
        <end position="201"/>
    </location>
</feature>
<feature type="domain" description="Thioredoxin" evidence="1">
    <location>
        <begin position="3"/>
        <end position="156"/>
    </location>
</feature>
<feature type="active site" description="Cysteine sulfenic acid (-SOH) intermediate" evidence="1">
    <location>
        <position position="44"/>
    </location>
</feature>
<feature type="binding site" evidence="1">
    <location>
        <position position="119"/>
    </location>
    <ligand>
        <name>substrate</name>
    </ligand>
</feature>
<dbReference type="EC" id="1.11.1.24" evidence="1"/>
<dbReference type="EMBL" id="AE017261">
    <property type="protein sequence ID" value="AAT43312.1"/>
    <property type="molecule type" value="Genomic_DNA"/>
</dbReference>
<dbReference type="RefSeq" id="WP_011177528.1">
    <property type="nucleotide sequence ID" value="NC_005877.1"/>
</dbReference>
<dbReference type="SMR" id="Q6L140"/>
<dbReference type="STRING" id="263820.PTO0727"/>
<dbReference type="PaxDb" id="263820-PTO0727"/>
<dbReference type="GeneID" id="2845195"/>
<dbReference type="KEGG" id="pto:PTO0727"/>
<dbReference type="PATRIC" id="fig|263820.9.peg.762"/>
<dbReference type="eggNOG" id="arCOG00312">
    <property type="taxonomic scope" value="Archaea"/>
</dbReference>
<dbReference type="HOGENOM" id="CLU_042529_4_4_2"/>
<dbReference type="InParanoid" id="Q6L140"/>
<dbReference type="OrthoDB" id="6924at2157"/>
<dbReference type="Proteomes" id="UP000000438">
    <property type="component" value="Chromosome"/>
</dbReference>
<dbReference type="GO" id="GO:0005829">
    <property type="term" value="C:cytosol"/>
    <property type="evidence" value="ECO:0007669"/>
    <property type="project" value="TreeGrafter"/>
</dbReference>
<dbReference type="GO" id="GO:0008379">
    <property type="term" value="F:thioredoxin peroxidase activity"/>
    <property type="evidence" value="ECO:0007669"/>
    <property type="project" value="TreeGrafter"/>
</dbReference>
<dbReference type="GO" id="GO:0045454">
    <property type="term" value="P:cell redox homeostasis"/>
    <property type="evidence" value="ECO:0007669"/>
    <property type="project" value="TreeGrafter"/>
</dbReference>
<dbReference type="GO" id="GO:0033554">
    <property type="term" value="P:cellular response to stress"/>
    <property type="evidence" value="ECO:0007669"/>
    <property type="project" value="TreeGrafter"/>
</dbReference>
<dbReference type="GO" id="GO:0042744">
    <property type="term" value="P:hydrogen peroxide catabolic process"/>
    <property type="evidence" value="ECO:0007669"/>
    <property type="project" value="TreeGrafter"/>
</dbReference>
<dbReference type="GO" id="GO:0006979">
    <property type="term" value="P:response to oxidative stress"/>
    <property type="evidence" value="ECO:0007669"/>
    <property type="project" value="TreeGrafter"/>
</dbReference>
<dbReference type="CDD" id="cd03016">
    <property type="entry name" value="PRX_1cys"/>
    <property type="match status" value="1"/>
</dbReference>
<dbReference type="FunFam" id="3.40.30.10:FF:000011">
    <property type="entry name" value="Peroxiredoxin PRX1"/>
    <property type="match status" value="1"/>
</dbReference>
<dbReference type="Gene3D" id="3.40.30.10">
    <property type="entry name" value="Glutaredoxin"/>
    <property type="match status" value="1"/>
</dbReference>
<dbReference type="HAMAP" id="MF_00401">
    <property type="entry name" value="Peroxiredoxin"/>
    <property type="match status" value="1"/>
</dbReference>
<dbReference type="InterPro" id="IPR000866">
    <property type="entry name" value="AhpC/TSA"/>
</dbReference>
<dbReference type="InterPro" id="IPR050217">
    <property type="entry name" value="Peroxiredoxin"/>
</dbReference>
<dbReference type="InterPro" id="IPR024706">
    <property type="entry name" value="Peroxiredoxin_AhpC-typ"/>
</dbReference>
<dbReference type="InterPro" id="IPR019479">
    <property type="entry name" value="Peroxiredoxin_C"/>
</dbReference>
<dbReference type="InterPro" id="IPR022915">
    <property type="entry name" value="Peroxiredoxin_TDXH"/>
</dbReference>
<dbReference type="InterPro" id="IPR045020">
    <property type="entry name" value="PRX_1cys"/>
</dbReference>
<dbReference type="InterPro" id="IPR036249">
    <property type="entry name" value="Thioredoxin-like_sf"/>
</dbReference>
<dbReference type="InterPro" id="IPR013766">
    <property type="entry name" value="Thioredoxin_domain"/>
</dbReference>
<dbReference type="NCBIfam" id="NF009668">
    <property type="entry name" value="PRK13189.1"/>
    <property type="match status" value="1"/>
</dbReference>
<dbReference type="NCBIfam" id="NF009669">
    <property type="entry name" value="PRK13190.1"/>
    <property type="match status" value="1"/>
</dbReference>
<dbReference type="PANTHER" id="PTHR10681">
    <property type="entry name" value="THIOREDOXIN PEROXIDASE"/>
    <property type="match status" value="1"/>
</dbReference>
<dbReference type="PANTHER" id="PTHR10681:SF128">
    <property type="entry name" value="THIOREDOXIN-DEPENDENT PEROXIDE REDUCTASE, MITOCHONDRIAL"/>
    <property type="match status" value="1"/>
</dbReference>
<dbReference type="Pfam" id="PF10417">
    <property type="entry name" value="1-cysPrx_C"/>
    <property type="match status" value="1"/>
</dbReference>
<dbReference type="Pfam" id="PF00578">
    <property type="entry name" value="AhpC-TSA"/>
    <property type="match status" value="1"/>
</dbReference>
<dbReference type="PIRSF" id="PIRSF000239">
    <property type="entry name" value="AHPC"/>
    <property type="match status" value="1"/>
</dbReference>
<dbReference type="SUPFAM" id="SSF52833">
    <property type="entry name" value="Thioredoxin-like"/>
    <property type="match status" value="1"/>
</dbReference>
<dbReference type="PROSITE" id="PS51352">
    <property type="entry name" value="THIOREDOXIN_2"/>
    <property type="match status" value="1"/>
</dbReference>
<reference key="1">
    <citation type="journal article" date="2004" name="Proc. Natl. Acad. Sci. U.S.A.">
        <title>Genome sequence of Picrophilus torridus and its implications for life around pH 0.</title>
        <authorList>
            <person name="Fuetterer O."/>
            <person name="Angelov A."/>
            <person name="Liesegang H."/>
            <person name="Gottschalk G."/>
            <person name="Schleper C."/>
            <person name="Schepers B."/>
            <person name="Dock C."/>
            <person name="Antranikian G."/>
            <person name="Liebl W."/>
        </authorList>
    </citation>
    <scope>NUCLEOTIDE SEQUENCE [LARGE SCALE GENOMIC DNA]</scope>
    <source>
        <strain>ATCC 700027 / DSM 9790 / JCM 10055 / NBRC 100828 / KAW 2/3</strain>
    </source>
</reference>
<organism>
    <name type="scientific">Picrophilus torridus (strain ATCC 700027 / DSM 9790 / JCM 10055 / NBRC 100828 / KAW 2/3)</name>
    <dbReference type="NCBI Taxonomy" id="1122961"/>
    <lineage>
        <taxon>Archaea</taxon>
        <taxon>Methanobacteriati</taxon>
        <taxon>Thermoplasmatota</taxon>
        <taxon>Thermoplasmata</taxon>
        <taxon>Thermoplasmatales</taxon>
        <taxon>Picrophilaceae</taxon>
        <taxon>Picrophilus</taxon>
    </lineage>
</organism>